<reference key="1">
    <citation type="journal article" date="2010" name="J. Bacteriol.">
        <title>Whole genome sequences of two Xylella fastidiosa strains (M12 and M23) causing almond leaf scorch disease in California.</title>
        <authorList>
            <person name="Chen J."/>
            <person name="Xie G."/>
            <person name="Han S."/>
            <person name="Chertkov O."/>
            <person name="Sims D."/>
            <person name="Civerolo E.L."/>
        </authorList>
    </citation>
    <scope>NUCLEOTIDE SEQUENCE [LARGE SCALE GENOMIC DNA]</scope>
    <source>
        <strain>M12</strain>
    </source>
</reference>
<organism>
    <name type="scientific">Xylella fastidiosa (strain M12)</name>
    <dbReference type="NCBI Taxonomy" id="405440"/>
    <lineage>
        <taxon>Bacteria</taxon>
        <taxon>Pseudomonadati</taxon>
        <taxon>Pseudomonadota</taxon>
        <taxon>Gammaproteobacteria</taxon>
        <taxon>Lysobacterales</taxon>
        <taxon>Lysobacteraceae</taxon>
        <taxon>Xylella</taxon>
    </lineage>
</organism>
<evidence type="ECO:0000255" key="1">
    <source>
        <dbReference type="HAMAP-Rule" id="MF_00079"/>
    </source>
</evidence>
<protein>
    <recommendedName>
        <fullName evidence="1">ATP phosphoribosyltransferase</fullName>
        <shortName evidence="1">ATP-PRT</shortName>
        <shortName evidence="1">ATP-PRTase</shortName>
        <ecNumber evidence="1">2.4.2.17</ecNumber>
    </recommendedName>
</protein>
<feature type="chain" id="PRO_1000092762" description="ATP phosphoribosyltransferase">
    <location>
        <begin position="1"/>
        <end position="304"/>
    </location>
</feature>
<sequence length="304" mass="33595">MSASTVLPVRDRLRIAIQKSGRLTEPARRLLTSCGLSWRQSRDKLFCYGESLPVDLLLVRDDDIPGLIAQGVCDLGIVGRNELDEQAASRRRNGLPVPYQTLRGLHFGQCRLMLAVPEEWEWQDISQLTGKRIATSYPAILADWLQTHHIAAQIVELSGSVEIAPRLGTADLICDLVSSGATLTAHQLKPVIQIMESQAVLAGMIRQPADARAGLLAMLLRRIDGMVNLRDSNLLMFRAFQEHLDALTRLLPDADPLVQLPDDGSGTLRVQTMCHGTITWQRLEELERAGAQGLMVLTVERSLA</sequence>
<name>HIS1_XYLFM</name>
<gene>
    <name evidence="1" type="primary">hisG</name>
    <name type="ordered locus">Xfasm12_1420</name>
</gene>
<keyword id="KW-0028">Amino-acid biosynthesis</keyword>
<keyword id="KW-0067">ATP-binding</keyword>
<keyword id="KW-0963">Cytoplasm</keyword>
<keyword id="KW-0328">Glycosyltransferase</keyword>
<keyword id="KW-0368">Histidine biosynthesis</keyword>
<keyword id="KW-0460">Magnesium</keyword>
<keyword id="KW-0479">Metal-binding</keyword>
<keyword id="KW-0547">Nucleotide-binding</keyword>
<keyword id="KW-0808">Transferase</keyword>
<accession>B0U3B4</accession>
<proteinExistence type="inferred from homology"/>
<dbReference type="EC" id="2.4.2.17" evidence="1"/>
<dbReference type="EMBL" id="CP000941">
    <property type="protein sequence ID" value="ACA12343.1"/>
    <property type="molecule type" value="Genomic_DNA"/>
</dbReference>
<dbReference type="RefSeq" id="WP_004083410.1">
    <property type="nucleotide sequence ID" value="NC_010513.1"/>
</dbReference>
<dbReference type="SMR" id="B0U3B4"/>
<dbReference type="KEGG" id="xfm:Xfasm12_1420"/>
<dbReference type="HOGENOM" id="CLU_038115_1_0_6"/>
<dbReference type="UniPathway" id="UPA00031">
    <property type="reaction ID" value="UER00006"/>
</dbReference>
<dbReference type="GO" id="GO:0005737">
    <property type="term" value="C:cytoplasm"/>
    <property type="evidence" value="ECO:0007669"/>
    <property type="project" value="UniProtKB-SubCell"/>
</dbReference>
<dbReference type="GO" id="GO:0005524">
    <property type="term" value="F:ATP binding"/>
    <property type="evidence" value="ECO:0007669"/>
    <property type="project" value="UniProtKB-KW"/>
</dbReference>
<dbReference type="GO" id="GO:0003879">
    <property type="term" value="F:ATP phosphoribosyltransferase activity"/>
    <property type="evidence" value="ECO:0007669"/>
    <property type="project" value="UniProtKB-UniRule"/>
</dbReference>
<dbReference type="GO" id="GO:0000287">
    <property type="term" value="F:magnesium ion binding"/>
    <property type="evidence" value="ECO:0007669"/>
    <property type="project" value="UniProtKB-UniRule"/>
</dbReference>
<dbReference type="GO" id="GO:0000105">
    <property type="term" value="P:L-histidine biosynthetic process"/>
    <property type="evidence" value="ECO:0007669"/>
    <property type="project" value="UniProtKB-UniRule"/>
</dbReference>
<dbReference type="FunFam" id="3.40.190.10:FF:000008">
    <property type="entry name" value="ATP phosphoribosyltransferase"/>
    <property type="match status" value="1"/>
</dbReference>
<dbReference type="Gene3D" id="3.30.70.120">
    <property type="match status" value="1"/>
</dbReference>
<dbReference type="Gene3D" id="3.40.190.10">
    <property type="entry name" value="Periplasmic binding protein-like II"/>
    <property type="match status" value="2"/>
</dbReference>
<dbReference type="HAMAP" id="MF_00079">
    <property type="entry name" value="HisG_Long"/>
    <property type="match status" value="1"/>
</dbReference>
<dbReference type="InterPro" id="IPR020621">
    <property type="entry name" value="ATP-PRT_HisG_long"/>
</dbReference>
<dbReference type="InterPro" id="IPR013820">
    <property type="entry name" value="ATP_PRibTrfase_cat"/>
</dbReference>
<dbReference type="InterPro" id="IPR018198">
    <property type="entry name" value="ATP_PRibTrfase_CS"/>
</dbReference>
<dbReference type="InterPro" id="IPR001348">
    <property type="entry name" value="ATP_PRibTrfase_HisG"/>
</dbReference>
<dbReference type="InterPro" id="IPR013115">
    <property type="entry name" value="HisG_C"/>
</dbReference>
<dbReference type="InterPro" id="IPR015867">
    <property type="entry name" value="N-reg_PII/ATP_PRibTrfase_C"/>
</dbReference>
<dbReference type="NCBIfam" id="TIGR00070">
    <property type="entry name" value="hisG"/>
    <property type="match status" value="1"/>
</dbReference>
<dbReference type="NCBIfam" id="TIGR03455">
    <property type="entry name" value="HisG_C-term"/>
    <property type="match status" value="1"/>
</dbReference>
<dbReference type="PANTHER" id="PTHR21403:SF8">
    <property type="entry name" value="ATP PHOSPHORIBOSYLTRANSFERASE"/>
    <property type="match status" value="1"/>
</dbReference>
<dbReference type="PANTHER" id="PTHR21403">
    <property type="entry name" value="ATP PHOSPHORIBOSYLTRANSFERASE ATP-PRTASE"/>
    <property type="match status" value="1"/>
</dbReference>
<dbReference type="Pfam" id="PF01634">
    <property type="entry name" value="HisG"/>
    <property type="match status" value="1"/>
</dbReference>
<dbReference type="Pfam" id="PF08029">
    <property type="entry name" value="HisG_C"/>
    <property type="match status" value="1"/>
</dbReference>
<dbReference type="SUPFAM" id="SSF53850">
    <property type="entry name" value="Periplasmic binding protein-like II"/>
    <property type="match status" value="1"/>
</dbReference>
<dbReference type="PROSITE" id="PS01316">
    <property type="entry name" value="ATP_P_PHORIBOSYLTR"/>
    <property type="match status" value="1"/>
</dbReference>
<comment type="function">
    <text evidence="1">Catalyzes the condensation of ATP and 5-phosphoribose 1-diphosphate to form N'-(5'-phosphoribosyl)-ATP (PR-ATP). Has a crucial role in the pathway because the rate of histidine biosynthesis seems to be controlled primarily by regulation of HisG enzymatic activity.</text>
</comment>
<comment type="catalytic activity">
    <reaction evidence="1">
        <text>1-(5-phospho-beta-D-ribosyl)-ATP + diphosphate = 5-phospho-alpha-D-ribose 1-diphosphate + ATP</text>
        <dbReference type="Rhea" id="RHEA:18473"/>
        <dbReference type="ChEBI" id="CHEBI:30616"/>
        <dbReference type="ChEBI" id="CHEBI:33019"/>
        <dbReference type="ChEBI" id="CHEBI:58017"/>
        <dbReference type="ChEBI" id="CHEBI:73183"/>
        <dbReference type="EC" id="2.4.2.17"/>
    </reaction>
</comment>
<comment type="cofactor">
    <cofactor evidence="1">
        <name>Mg(2+)</name>
        <dbReference type="ChEBI" id="CHEBI:18420"/>
    </cofactor>
</comment>
<comment type="activity regulation">
    <text evidence="1">Feedback inhibited by histidine.</text>
</comment>
<comment type="pathway">
    <text evidence="1">Amino-acid biosynthesis; L-histidine biosynthesis; L-histidine from 5-phospho-alpha-D-ribose 1-diphosphate: step 1/9.</text>
</comment>
<comment type="subcellular location">
    <subcellularLocation>
        <location evidence="1">Cytoplasm</location>
    </subcellularLocation>
</comment>
<comment type="similarity">
    <text evidence="1">Belongs to the ATP phosphoribosyltransferase family. Long subfamily.</text>
</comment>